<name>DSBA_SALTY</name>
<keyword id="KW-0002">3D-structure</keyword>
<keyword id="KW-1015">Disulfide bond</keyword>
<keyword id="KW-0574">Periplasm</keyword>
<keyword id="KW-0676">Redox-active center</keyword>
<keyword id="KW-1185">Reference proteome</keyword>
<keyword id="KW-0732">Signal</keyword>
<accession>P0A2H9</accession>
<accession>O30848</accession>
<accession>O69191</accession>
<gene>
    <name type="primary">dsbA</name>
    <name type="ordered locus">STM3997</name>
</gene>
<reference key="1">
    <citation type="journal article" date="2001" name="Can. J. Microbiol.">
        <title>Isolation and characterization of a chromosomally encoded disulphide oxidoreductase from Salmonella enterica serovar Typhimurium.</title>
        <authorList>
            <person name="Turcot I."/>
            <person name="Ponnampalam T.V."/>
            <person name="Bouwman C.W."/>
            <person name="Martin N.L."/>
        </authorList>
    </citation>
    <scope>NUCLEOTIDE SEQUENCE [GENOMIC DNA]</scope>
    <source>
        <strain>LT2</strain>
    </source>
</reference>
<reference key="2">
    <citation type="journal article" date="2001" name="Nature">
        <title>Complete genome sequence of Salmonella enterica serovar Typhimurium LT2.</title>
        <authorList>
            <person name="McClelland M."/>
            <person name="Sanderson K.E."/>
            <person name="Spieth J."/>
            <person name="Clifton S.W."/>
            <person name="Latreille P."/>
            <person name="Courtney L."/>
            <person name="Porwollik S."/>
            <person name="Ali J."/>
            <person name="Dante M."/>
            <person name="Du F."/>
            <person name="Hou S."/>
            <person name="Layman D."/>
            <person name="Leonard S."/>
            <person name="Nguyen C."/>
            <person name="Scott K."/>
            <person name="Holmes A."/>
            <person name="Grewal N."/>
            <person name="Mulvaney E."/>
            <person name="Ryan E."/>
            <person name="Sun H."/>
            <person name="Florea L."/>
            <person name="Miller W."/>
            <person name="Stoneking T."/>
            <person name="Nhan M."/>
            <person name="Waterston R."/>
            <person name="Wilson R.K."/>
        </authorList>
    </citation>
    <scope>NUCLEOTIDE SEQUENCE [LARGE SCALE GENOMIC DNA]</scope>
    <source>
        <strain>LT2 / SGSC1412 / ATCC 700720</strain>
    </source>
</reference>
<evidence type="ECO:0000250" key="1"/>
<evidence type="ECO:0000255" key="2">
    <source>
        <dbReference type="PROSITE-ProRule" id="PRU00691"/>
    </source>
</evidence>
<evidence type="ECO:0000305" key="3"/>
<evidence type="ECO:0007829" key="4">
    <source>
        <dbReference type="PDB" id="3L9S"/>
    </source>
</evidence>
<sequence>MKKIWLALAGMVLAFSASAAQISDGKQYITLDKPVAGEPQVLEFFSFYCPHCYQFEEVLHVSDNVKKKLPEGTKMTKYHVEFLGPLGKELTQAWAVAMALGVEDKVTVPLFEAVQKTQTVQSAADIRKVFVDAGVKGEDYDAAWNSFVVKSLVAQQEKAAADLQLQGVPAMFVNGKYQINPQGMDTSSMDVFVQQYADTVKYLVDKK</sequence>
<feature type="signal peptide" evidence="1">
    <location>
        <begin position="1"/>
        <end position="19"/>
    </location>
</feature>
<feature type="chain" id="PRO_0000034266" description="Thiol:disulfide interchange protein DsbA">
    <location>
        <begin position="20"/>
        <end position="207"/>
    </location>
</feature>
<feature type="domain" description="Thioredoxin" evidence="2">
    <location>
        <begin position="20"/>
        <end position="158"/>
    </location>
</feature>
<feature type="disulfide bond" description="Redox-active" evidence="2">
    <location>
        <begin position="49"/>
        <end position="52"/>
    </location>
</feature>
<feature type="sequence conflict" description="In Ref. 1; AAB81592." evidence="3" ref="1">
    <original>D</original>
    <variation>N</variation>
    <location>
        <position position="139"/>
    </location>
</feature>
<feature type="turn" evidence="4">
    <location>
        <begin position="25"/>
        <end position="27"/>
    </location>
</feature>
<feature type="strand" evidence="4">
    <location>
        <begin position="28"/>
        <end position="30"/>
    </location>
</feature>
<feature type="strand" evidence="4">
    <location>
        <begin position="37"/>
        <end position="39"/>
    </location>
</feature>
<feature type="strand" evidence="4">
    <location>
        <begin position="41"/>
        <end position="45"/>
    </location>
</feature>
<feature type="helix" evidence="4">
    <location>
        <begin position="50"/>
        <end position="57"/>
    </location>
</feature>
<feature type="helix" evidence="4">
    <location>
        <begin position="61"/>
        <end position="68"/>
    </location>
</feature>
<feature type="strand" evidence="4">
    <location>
        <begin position="75"/>
        <end position="79"/>
    </location>
</feature>
<feature type="strand" evidence="4">
    <location>
        <begin position="81"/>
        <end position="84"/>
    </location>
</feature>
<feature type="helix" evidence="4">
    <location>
        <begin position="87"/>
        <end position="100"/>
    </location>
</feature>
<feature type="helix" evidence="4">
    <location>
        <begin position="103"/>
        <end position="115"/>
    </location>
</feature>
<feature type="helix" evidence="4">
    <location>
        <begin position="123"/>
        <end position="132"/>
    </location>
</feature>
<feature type="helix" evidence="4">
    <location>
        <begin position="137"/>
        <end position="144"/>
    </location>
</feature>
<feature type="helix" evidence="4">
    <location>
        <begin position="147"/>
        <end position="162"/>
    </location>
</feature>
<feature type="strand" evidence="4">
    <location>
        <begin position="167"/>
        <end position="173"/>
    </location>
</feature>
<feature type="turn" evidence="4">
    <location>
        <begin position="174"/>
        <end position="176"/>
    </location>
</feature>
<feature type="strand" evidence="4">
    <location>
        <begin position="177"/>
        <end position="179"/>
    </location>
</feature>
<feature type="helix" evidence="4">
    <location>
        <begin position="181"/>
        <end position="183"/>
    </location>
</feature>
<feature type="helix" evidence="4">
    <location>
        <begin position="189"/>
        <end position="205"/>
    </location>
</feature>
<organism>
    <name type="scientific">Salmonella typhimurium (strain LT2 / SGSC1412 / ATCC 700720)</name>
    <dbReference type="NCBI Taxonomy" id="99287"/>
    <lineage>
        <taxon>Bacteria</taxon>
        <taxon>Pseudomonadati</taxon>
        <taxon>Pseudomonadota</taxon>
        <taxon>Gammaproteobacteria</taxon>
        <taxon>Enterobacterales</taxon>
        <taxon>Enterobacteriaceae</taxon>
        <taxon>Salmonella</taxon>
    </lineage>
</organism>
<proteinExistence type="evidence at protein level"/>
<comment type="function">
    <text evidence="1">Required for disulfide bond formation in some periplasmic proteins such as PhoA or OmpA. Acts by transferring its disulfide bond to other proteins and is reduced in the process. DsbA is reoxidized by DsbB. It is required for pilus biogenesis (By similarity).</text>
</comment>
<comment type="subcellular location">
    <subcellularLocation>
        <location>Periplasm</location>
    </subcellularLocation>
</comment>
<comment type="similarity">
    <text evidence="3">Belongs to the thioredoxin family. DsbA subfamily.</text>
</comment>
<dbReference type="EMBL" id="AF019110">
    <property type="protein sequence ID" value="AAB81592.1"/>
    <property type="molecule type" value="Genomic_DNA"/>
</dbReference>
<dbReference type="EMBL" id="AE006468">
    <property type="protein sequence ID" value="AAL22836.1"/>
    <property type="molecule type" value="Genomic_DNA"/>
</dbReference>
<dbReference type="RefSeq" id="NP_462877.1">
    <property type="nucleotide sequence ID" value="NC_003197.2"/>
</dbReference>
<dbReference type="RefSeq" id="WP_000725364.1">
    <property type="nucleotide sequence ID" value="NC_003197.2"/>
</dbReference>
<dbReference type="PDB" id="3L9S">
    <property type="method" value="X-ray"/>
    <property type="resolution" value="1.58 A"/>
    <property type="chains" value="A=19-207"/>
</dbReference>
<dbReference type="PDBsum" id="3L9S"/>
<dbReference type="SMR" id="P0A2H9"/>
<dbReference type="STRING" id="99287.STM3997"/>
<dbReference type="PaxDb" id="99287-STM3997"/>
<dbReference type="GeneID" id="1255523"/>
<dbReference type="KEGG" id="stm:STM3997"/>
<dbReference type="PATRIC" id="fig|99287.12.peg.4211"/>
<dbReference type="HOGENOM" id="CLU_088255_3_0_6"/>
<dbReference type="OMA" id="NAIHKQK"/>
<dbReference type="PhylomeDB" id="P0A2H9"/>
<dbReference type="BioCyc" id="SENT99287:STM3997-MONOMER"/>
<dbReference type="EvolutionaryTrace" id="P0A2H9"/>
<dbReference type="Proteomes" id="UP000001014">
    <property type="component" value="Chromosome"/>
</dbReference>
<dbReference type="GO" id="GO:0030288">
    <property type="term" value="C:outer membrane-bounded periplasmic space"/>
    <property type="evidence" value="ECO:0000318"/>
    <property type="project" value="GO_Central"/>
</dbReference>
<dbReference type="GO" id="GO:0003756">
    <property type="term" value="F:protein disulfide isomerase activity"/>
    <property type="evidence" value="ECO:0000318"/>
    <property type="project" value="GO_Central"/>
</dbReference>
<dbReference type="GO" id="GO:0015035">
    <property type="term" value="F:protein-disulfide reductase activity"/>
    <property type="evidence" value="ECO:0000318"/>
    <property type="project" value="GO_Central"/>
</dbReference>
<dbReference type="GO" id="GO:0071236">
    <property type="term" value="P:cellular response to antibiotic"/>
    <property type="evidence" value="ECO:0000318"/>
    <property type="project" value="GO_Central"/>
</dbReference>
<dbReference type="CDD" id="cd03019">
    <property type="entry name" value="DsbA_DsbA"/>
    <property type="match status" value="1"/>
</dbReference>
<dbReference type="Gene3D" id="3.40.30.10">
    <property type="entry name" value="Glutaredoxin"/>
    <property type="match status" value="1"/>
</dbReference>
<dbReference type="InterPro" id="IPR001853">
    <property type="entry name" value="DSBA-like_thioredoxin_dom"/>
</dbReference>
<dbReference type="InterPro" id="IPR023205">
    <property type="entry name" value="DsbA/DsbL"/>
</dbReference>
<dbReference type="InterPro" id="IPR050824">
    <property type="entry name" value="Thiol_disulfide_DsbA"/>
</dbReference>
<dbReference type="InterPro" id="IPR036249">
    <property type="entry name" value="Thioredoxin-like_sf"/>
</dbReference>
<dbReference type="InterPro" id="IPR017937">
    <property type="entry name" value="Thioredoxin_CS"/>
</dbReference>
<dbReference type="InterPro" id="IPR013766">
    <property type="entry name" value="Thioredoxin_domain"/>
</dbReference>
<dbReference type="NCBIfam" id="NF008198">
    <property type="entry name" value="PRK10954.1"/>
    <property type="match status" value="1"/>
</dbReference>
<dbReference type="PANTHER" id="PTHR35891">
    <property type="entry name" value="THIOL:DISULFIDE INTERCHANGE PROTEIN DSBA"/>
    <property type="match status" value="1"/>
</dbReference>
<dbReference type="PANTHER" id="PTHR35891:SF2">
    <property type="entry name" value="THIOL:DISULFIDE INTERCHANGE PROTEIN DSBA"/>
    <property type="match status" value="1"/>
</dbReference>
<dbReference type="Pfam" id="PF01323">
    <property type="entry name" value="DSBA"/>
    <property type="match status" value="1"/>
</dbReference>
<dbReference type="PIRSF" id="PIRSF001488">
    <property type="entry name" value="Tdi_protein"/>
    <property type="match status" value="1"/>
</dbReference>
<dbReference type="SUPFAM" id="SSF52833">
    <property type="entry name" value="Thioredoxin-like"/>
    <property type="match status" value="1"/>
</dbReference>
<dbReference type="PROSITE" id="PS00194">
    <property type="entry name" value="THIOREDOXIN_1"/>
    <property type="match status" value="1"/>
</dbReference>
<dbReference type="PROSITE" id="PS51352">
    <property type="entry name" value="THIOREDOXIN_2"/>
    <property type="match status" value="1"/>
</dbReference>
<protein>
    <recommendedName>
        <fullName>Thiol:disulfide interchange protein DsbA</fullName>
    </recommendedName>
</protein>